<reference key="1">
    <citation type="submission" date="2003-10" db="EMBL/GenBank/DDBJ databases">
        <authorList>
            <consortium name="NIH - Xenopus Gene Collection (XGC) project"/>
        </authorList>
    </citation>
    <scope>NUCLEOTIDE SEQUENCE [LARGE SCALE MRNA]</scope>
    <source>
        <tissue>Ovary</tissue>
    </source>
</reference>
<accession>Q6PCG0</accession>
<gene>
    <name type="primary">ywhag-a</name>
</gene>
<organism>
    <name type="scientific">Xenopus laevis</name>
    <name type="common">African clawed frog</name>
    <dbReference type="NCBI Taxonomy" id="8355"/>
    <lineage>
        <taxon>Eukaryota</taxon>
        <taxon>Metazoa</taxon>
        <taxon>Chordata</taxon>
        <taxon>Craniata</taxon>
        <taxon>Vertebrata</taxon>
        <taxon>Euteleostomi</taxon>
        <taxon>Amphibia</taxon>
        <taxon>Batrachia</taxon>
        <taxon>Anura</taxon>
        <taxon>Pipoidea</taxon>
        <taxon>Pipidae</taxon>
        <taxon>Xenopodinae</taxon>
        <taxon>Xenopus</taxon>
        <taxon>Xenopus</taxon>
    </lineage>
</organism>
<feature type="chain" id="PRO_0000058612" description="14-3-3 protein gamma-A">
    <location>
        <begin position="1"/>
        <end position="247"/>
    </location>
</feature>
<feature type="site" description="Interaction with phosphoserine on interacting protein" evidence="1">
    <location>
        <position position="57"/>
    </location>
</feature>
<feature type="site" description="Interaction with phosphoserine on interacting protein" evidence="1">
    <location>
        <position position="132"/>
    </location>
</feature>
<evidence type="ECO:0000250" key="1">
    <source>
        <dbReference type="UniProtKB" id="P61981"/>
    </source>
</evidence>
<evidence type="ECO:0000250" key="2">
    <source>
        <dbReference type="UniProtKB" id="P68252"/>
    </source>
</evidence>
<evidence type="ECO:0000305" key="3"/>
<sequence>MVDREQLVQKARLAEQAERYDDMAAAMKAVTELNEPLSNEERNLLSVAYKNVVGARRSSWRVISSIEQKTSADGNEKKIEMVRAYREKIEKELETVCQDVLSLLDNFLIKNCSETQYESKVFYLKMKGDYYRYLAEVATGEKRATVVESSEKAYSEAHEISKEHMQPTHPIRLGLALNYSVFYYEIQNAPEQACHLAKTAFDDAIAELDTLNEDSYKDSTLIMQLLRDNLTLWTSDQQDDDGGEGNN</sequence>
<keyword id="KW-0963">Cytoplasm</keyword>
<keyword id="KW-1185">Reference proteome</keyword>
<proteinExistence type="evidence at transcript level"/>
<protein>
    <recommendedName>
        <fullName>14-3-3 protein gamma-A</fullName>
    </recommendedName>
</protein>
<name>143GA_XENLA</name>
<dbReference type="EMBL" id="BC059340">
    <property type="protein sequence ID" value="AAH59340.1"/>
    <property type="molecule type" value="mRNA"/>
</dbReference>
<dbReference type="RefSeq" id="NP_001080032.1">
    <property type="nucleotide sequence ID" value="NM_001086563.1"/>
</dbReference>
<dbReference type="SMR" id="Q6PCG0"/>
<dbReference type="DNASU" id="379724"/>
<dbReference type="GeneID" id="379724"/>
<dbReference type="KEGG" id="xla:379724"/>
<dbReference type="AGR" id="Xenbase:XB-GENE-951356"/>
<dbReference type="CTD" id="379724"/>
<dbReference type="Xenbase" id="XB-GENE-951356">
    <property type="gene designation" value="ywhag.L"/>
</dbReference>
<dbReference type="OMA" id="FNETIDW"/>
<dbReference type="OrthoDB" id="10260625at2759"/>
<dbReference type="Proteomes" id="UP000186698">
    <property type="component" value="Chromosome 2L"/>
</dbReference>
<dbReference type="Bgee" id="379724">
    <property type="expression patterns" value="Expressed in brain and 19 other cell types or tissues"/>
</dbReference>
<dbReference type="GO" id="GO:0005737">
    <property type="term" value="C:cytoplasm"/>
    <property type="evidence" value="ECO:0000318"/>
    <property type="project" value="GO_Central"/>
</dbReference>
<dbReference type="GO" id="GO:0140031">
    <property type="term" value="F:phosphorylation-dependent protein binding"/>
    <property type="evidence" value="ECO:0000250"/>
    <property type="project" value="UniProtKB"/>
</dbReference>
<dbReference type="GO" id="GO:0005080">
    <property type="term" value="F:protein kinase C binding"/>
    <property type="evidence" value="ECO:0000318"/>
    <property type="project" value="GO_Central"/>
</dbReference>
<dbReference type="GO" id="GO:0140311">
    <property type="term" value="F:protein sequestering activity"/>
    <property type="evidence" value="ECO:0000250"/>
    <property type="project" value="UniProtKB"/>
</dbReference>
<dbReference type="GO" id="GO:0008104">
    <property type="term" value="P:protein localization"/>
    <property type="evidence" value="ECO:0000318"/>
    <property type="project" value="GO_Central"/>
</dbReference>
<dbReference type="GO" id="GO:0007165">
    <property type="term" value="P:signal transduction"/>
    <property type="evidence" value="ECO:0000318"/>
    <property type="project" value="GO_Central"/>
</dbReference>
<dbReference type="CDD" id="cd10024">
    <property type="entry name" value="14-3-3_gamma"/>
    <property type="match status" value="1"/>
</dbReference>
<dbReference type="FunFam" id="1.20.190.20:FF:000001">
    <property type="entry name" value="14-3-3 gamma 1"/>
    <property type="match status" value="1"/>
</dbReference>
<dbReference type="Gene3D" id="1.20.190.20">
    <property type="entry name" value="14-3-3 domain"/>
    <property type="match status" value="1"/>
</dbReference>
<dbReference type="InterPro" id="IPR000308">
    <property type="entry name" value="14-3-3"/>
</dbReference>
<dbReference type="InterPro" id="IPR023409">
    <property type="entry name" value="14-3-3_CS"/>
</dbReference>
<dbReference type="InterPro" id="IPR036815">
    <property type="entry name" value="14-3-3_dom_sf"/>
</dbReference>
<dbReference type="InterPro" id="IPR023410">
    <property type="entry name" value="14-3-3_domain"/>
</dbReference>
<dbReference type="PANTHER" id="PTHR18860">
    <property type="entry name" value="14-3-3 PROTEIN"/>
    <property type="match status" value="1"/>
</dbReference>
<dbReference type="Pfam" id="PF00244">
    <property type="entry name" value="14-3-3"/>
    <property type="match status" value="1"/>
</dbReference>
<dbReference type="PIRSF" id="PIRSF000868">
    <property type="entry name" value="14-3-3"/>
    <property type="match status" value="1"/>
</dbReference>
<dbReference type="PRINTS" id="PR00305">
    <property type="entry name" value="1433ZETA"/>
</dbReference>
<dbReference type="SMART" id="SM00101">
    <property type="entry name" value="14_3_3"/>
    <property type="match status" value="1"/>
</dbReference>
<dbReference type="SUPFAM" id="SSF48445">
    <property type="entry name" value="14-3-3 protein"/>
    <property type="match status" value="1"/>
</dbReference>
<dbReference type="PROSITE" id="PS00796">
    <property type="entry name" value="1433_1"/>
    <property type="match status" value="1"/>
</dbReference>
<dbReference type="PROSITE" id="PS00797">
    <property type="entry name" value="1433_2"/>
    <property type="match status" value="1"/>
</dbReference>
<comment type="function">
    <text evidence="1">Adapter protein implicated in the regulation of a large spectrum of both general and specialized signaling pathways. Binds to a large number of partners, usually by recognition of a phosphoserine or phosphothreonine motif. Binding generally results in the modulation of the activity of the binding partner.</text>
</comment>
<comment type="subunit">
    <text evidence="1">Homodimer, and heterodimer with other family members.</text>
</comment>
<comment type="subcellular location">
    <subcellularLocation>
        <location evidence="2">Cytoplasm</location>
    </subcellularLocation>
</comment>
<comment type="similarity">
    <text evidence="3">Belongs to the 14-3-3 family.</text>
</comment>